<comment type="function">
    <text evidence="1">Allows the formation of correctly charged Gln-tRNA(Gln) through the transamidation of misacylated Glu-tRNA(Gln) in organisms which lack glutaminyl-tRNA synthetase. The reaction takes place in the presence of glutamine and ATP through an activated gamma-phospho-Glu-tRNA(Gln).</text>
</comment>
<comment type="catalytic activity">
    <reaction evidence="1">
        <text>L-glutamyl-tRNA(Gln) + L-glutamine + ATP + H2O = L-glutaminyl-tRNA(Gln) + L-glutamate + ADP + phosphate + H(+)</text>
        <dbReference type="Rhea" id="RHEA:17521"/>
        <dbReference type="Rhea" id="RHEA-COMP:9681"/>
        <dbReference type="Rhea" id="RHEA-COMP:9684"/>
        <dbReference type="ChEBI" id="CHEBI:15377"/>
        <dbReference type="ChEBI" id="CHEBI:15378"/>
        <dbReference type="ChEBI" id="CHEBI:29985"/>
        <dbReference type="ChEBI" id="CHEBI:30616"/>
        <dbReference type="ChEBI" id="CHEBI:43474"/>
        <dbReference type="ChEBI" id="CHEBI:58359"/>
        <dbReference type="ChEBI" id="CHEBI:78520"/>
        <dbReference type="ChEBI" id="CHEBI:78521"/>
        <dbReference type="ChEBI" id="CHEBI:456216"/>
        <dbReference type="EC" id="6.3.5.7"/>
    </reaction>
</comment>
<comment type="subunit">
    <text evidence="1">Heterotrimer of A, B and C subunits.</text>
</comment>
<comment type="similarity">
    <text evidence="1">Belongs to the amidase family. GatA subfamily.</text>
</comment>
<accession>A9WYR3</accession>
<organism>
    <name type="scientific">Brucella suis (strain ATCC 23445 / NCTC 10510)</name>
    <dbReference type="NCBI Taxonomy" id="470137"/>
    <lineage>
        <taxon>Bacteria</taxon>
        <taxon>Pseudomonadati</taxon>
        <taxon>Pseudomonadota</taxon>
        <taxon>Alphaproteobacteria</taxon>
        <taxon>Hyphomicrobiales</taxon>
        <taxon>Brucellaceae</taxon>
        <taxon>Brucella/Ochrobactrum group</taxon>
        <taxon>Brucella</taxon>
    </lineage>
</organism>
<protein>
    <recommendedName>
        <fullName evidence="1">Glutamyl-tRNA(Gln) amidotransferase subunit A</fullName>
        <shortName evidence="1">Glu-ADT subunit A</shortName>
        <ecNumber evidence="1">6.3.5.7</ecNumber>
    </recommendedName>
</protein>
<gene>
    <name evidence="1" type="primary">gatA</name>
    <name type="ordered locus">BSUIS_B0591</name>
</gene>
<evidence type="ECO:0000255" key="1">
    <source>
        <dbReference type="HAMAP-Rule" id="MF_00120"/>
    </source>
</evidence>
<sequence length="493" mass="52417">MSELTALTIAEARDKLKAKAITATELTDAYLSAIDAANDAINAYVAVTHDQARSMAKASDERIAKGEAGALEGIPLGVKDLFATKGVHTQACSHILDGFKPEYESTVTANLWADGAVMLGKLNMDEFAMGSSNETSYYGPVKNPWRAKGSNADLVPGGSSGGSAAAVAAHLCAGATATDTGGSIRQPAAFTGTVGIKPTYGRVSRWGTVAFASSLDQAGPIARDVRDAAILMKSTASLDLKDTTSVDLPVPDYEAALGRSVKGMKIGIPREYRVDGMPGEIEELWQKGIQYLKDAGAEIVDISLPHTKYALPAYYIVAPAEASSNLARYDGVRYGLRVPGKDIADMYEQTRAAGFGKEVKRRIMIGTYVLSAGYYDAYYLRAQKVRTLIKKDFEDVFAKGVDAILTPATPSAAFGLADEVLANDPVKMYLNDIFTVTVNMAGLPGIAVPAGLNGQGLPLGLQLIGRPFEEETLFQAAHVIEQAAGRFTPAKWW</sequence>
<keyword id="KW-0067">ATP-binding</keyword>
<keyword id="KW-0436">Ligase</keyword>
<keyword id="KW-0547">Nucleotide-binding</keyword>
<keyword id="KW-0648">Protein biosynthesis</keyword>
<reference key="1">
    <citation type="submission" date="2007-12" db="EMBL/GenBank/DDBJ databases">
        <title>Brucella suis ATCC 23445 whole genome shotgun sequencing project.</title>
        <authorList>
            <person name="Setubal J.C."/>
            <person name="Bowns C."/>
            <person name="Boyle S."/>
            <person name="Crasta O.R."/>
            <person name="Czar M.J."/>
            <person name="Dharmanolla C."/>
            <person name="Gillespie J.J."/>
            <person name="Kenyon R.W."/>
            <person name="Lu J."/>
            <person name="Mane S."/>
            <person name="Mohapatra S."/>
            <person name="Nagrani S."/>
            <person name="Purkayastha A."/>
            <person name="Rajasimha H.K."/>
            <person name="Shallom J.M."/>
            <person name="Shallom S."/>
            <person name="Shukla M."/>
            <person name="Snyder E.E."/>
            <person name="Sobral B.W."/>
            <person name="Wattam A.R."/>
            <person name="Will R."/>
            <person name="Williams K."/>
            <person name="Yoo H."/>
            <person name="Bruce D."/>
            <person name="Detter C."/>
            <person name="Munk C."/>
            <person name="Brettin T.S."/>
        </authorList>
    </citation>
    <scope>NUCLEOTIDE SEQUENCE [LARGE SCALE GENOMIC DNA]</scope>
    <source>
        <strain>ATCC 23445 / NCTC 10510</strain>
    </source>
</reference>
<name>GATA_BRUSI</name>
<proteinExistence type="inferred from homology"/>
<feature type="chain" id="PRO_1000076123" description="Glutamyl-tRNA(Gln) amidotransferase subunit A">
    <location>
        <begin position="1"/>
        <end position="493"/>
    </location>
</feature>
<feature type="active site" description="Charge relay system" evidence="1">
    <location>
        <position position="79"/>
    </location>
</feature>
<feature type="active site" description="Charge relay system" evidence="1">
    <location>
        <position position="159"/>
    </location>
</feature>
<feature type="active site" description="Acyl-ester intermediate" evidence="1">
    <location>
        <position position="183"/>
    </location>
</feature>
<dbReference type="EC" id="6.3.5.7" evidence="1"/>
<dbReference type="EMBL" id="CP000912">
    <property type="protein sequence ID" value="ABY39579.1"/>
    <property type="molecule type" value="Genomic_DNA"/>
</dbReference>
<dbReference type="RefSeq" id="WP_006073727.1">
    <property type="nucleotide sequence ID" value="NC_010167.1"/>
</dbReference>
<dbReference type="SMR" id="A9WYR3"/>
<dbReference type="KEGG" id="bmt:BSUIS_B0591"/>
<dbReference type="HOGENOM" id="CLU_009600_0_3_5"/>
<dbReference type="Proteomes" id="UP000008545">
    <property type="component" value="Chromosome II"/>
</dbReference>
<dbReference type="GO" id="GO:0030956">
    <property type="term" value="C:glutamyl-tRNA(Gln) amidotransferase complex"/>
    <property type="evidence" value="ECO:0007669"/>
    <property type="project" value="InterPro"/>
</dbReference>
<dbReference type="GO" id="GO:0005524">
    <property type="term" value="F:ATP binding"/>
    <property type="evidence" value="ECO:0007669"/>
    <property type="project" value="UniProtKB-KW"/>
</dbReference>
<dbReference type="GO" id="GO:0050567">
    <property type="term" value="F:glutaminyl-tRNA synthase (glutamine-hydrolyzing) activity"/>
    <property type="evidence" value="ECO:0007669"/>
    <property type="project" value="UniProtKB-UniRule"/>
</dbReference>
<dbReference type="GO" id="GO:0006412">
    <property type="term" value="P:translation"/>
    <property type="evidence" value="ECO:0007669"/>
    <property type="project" value="UniProtKB-UniRule"/>
</dbReference>
<dbReference type="Gene3D" id="3.90.1300.10">
    <property type="entry name" value="Amidase signature (AS) domain"/>
    <property type="match status" value="1"/>
</dbReference>
<dbReference type="HAMAP" id="MF_00120">
    <property type="entry name" value="GatA"/>
    <property type="match status" value="1"/>
</dbReference>
<dbReference type="InterPro" id="IPR000120">
    <property type="entry name" value="Amidase"/>
</dbReference>
<dbReference type="InterPro" id="IPR020556">
    <property type="entry name" value="Amidase_CS"/>
</dbReference>
<dbReference type="InterPro" id="IPR023631">
    <property type="entry name" value="Amidase_dom"/>
</dbReference>
<dbReference type="InterPro" id="IPR036928">
    <property type="entry name" value="AS_sf"/>
</dbReference>
<dbReference type="InterPro" id="IPR004412">
    <property type="entry name" value="GatA"/>
</dbReference>
<dbReference type="NCBIfam" id="TIGR00132">
    <property type="entry name" value="gatA"/>
    <property type="match status" value="1"/>
</dbReference>
<dbReference type="PANTHER" id="PTHR11895:SF151">
    <property type="entry name" value="GLUTAMYL-TRNA(GLN) AMIDOTRANSFERASE SUBUNIT A"/>
    <property type="match status" value="1"/>
</dbReference>
<dbReference type="PANTHER" id="PTHR11895">
    <property type="entry name" value="TRANSAMIDASE"/>
    <property type="match status" value="1"/>
</dbReference>
<dbReference type="Pfam" id="PF01425">
    <property type="entry name" value="Amidase"/>
    <property type="match status" value="1"/>
</dbReference>
<dbReference type="SUPFAM" id="SSF75304">
    <property type="entry name" value="Amidase signature (AS) enzymes"/>
    <property type="match status" value="1"/>
</dbReference>
<dbReference type="PROSITE" id="PS00571">
    <property type="entry name" value="AMIDASES"/>
    <property type="match status" value="1"/>
</dbReference>